<organism>
    <name type="scientific">Hahella chejuensis (strain KCTC 2396)</name>
    <dbReference type="NCBI Taxonomy" id="349521"/>
    <lineage>
        <taxon>Bacteria</taxon>
        <taxon>Pseudomonadati</taxon>
        <taxon>Pseudomonadota</taxon>
        <taxon>Gammaproteobacteria</taxon>
        <taxon>Oceanospirillales</taxon>
        <taxon>Hahellaceae</taxon>
        <taxon>Hahella</taxon>
    </lineage>
</organism>
<reference key="1">
    <citation type="journal article" date="2005" name="Nucleic Acids Res.">
        <title>Genomic blueprint of Hahella chejuensis, a marine microbe producing an algicidal agent.</title>
        <authorList>
            <person name="Jeong H."/>
            <person name="Yim J.H."/>
            <person name="Lee C."/>
            <person name="Choi S.-H."/>
            <person name="Park Y.K."/>
            <person name="Yoon S.H."/>
            <person name="Hur C.-G."/>
            <person name="Kang H.-Y."/>
            <person name="Kim D."/>
            <person name="Lee H.H."/>
            <person name="Park K.H."/>
            <person name="Park S.-H."/>
            <person name="Park H.-S."/>
            <person name="Lee H.K."/>
            <person name="Oh T.K."/>
            <person name="Kim J.F."/>
        </authorList>
    </citation>
    <scope>NUCLEOTIDE SEQUENCE [LARGE SCALE GENOMIC DNA]</scope>
    <source>
        <strain>KCTC 2396</strain>
    </source>
</reference>
<gene>
    <name type="ordered locus">HCH_05838</name>
</gene>
<name>Y5838_HAHCH</name>
<accession>Q2SA36</accession>
<comment type="similarity">
    <text evidence="1">Belongs to the UPF0250 family.</text>
</comment>
<feature type="chain" id="PRO_1000061872" description="UPF0250 protein HCH_05838">
    <location>
        <begin position="1"/>
        <end position="91"/>
    </location>
</feature>
<dbReference type="EMBL" id="CP000155">
    <property type="protein sequence ID" value="ABC32488.1"/>
    <property type="molecule type" value="Genomic_DNA"/>
</dbReference>
<dbReference type="RefSeq" id="WP_011399547.1">
    <property type="nucleotide sequence ID" value="NC_007645.1"/>
</dbReference>
<dbReference type="SMR" id="Q2SA36"/>
<dbReference type="STRING" id="349521.HCH_05838"/>
<dbReference type="KEGG" id="hch:HCH_05838"/>
<dbReference type="eggNOG" id="COG2921">
    <property type="taxonomic scope" value="Bacteria"/>
</dbReference>
<dbReference type="HOGENOM" id="CLU_161438_1_2_6"/>
<dbReference type="OrthoDB" id="9793424at2"/>
<dbReference type="Proteomes" id="UP000000238">
    <property type="component" value="Chromosome"/>
</dbReference>
<dbReference type="GO" id="GO:0005829">
    <property type="term" value="C:cytosol"/>
    <property type="evidence" value="ECO:0007669"/>
    <property type="project" value="TreeGrafter"/>
</dbReference>
<dbReference type="Gene3D" id="3.30.70.260">
    <property type="match status" value="1"/>
</dbReference>
<dbReference type="HAMAP" id="MF_00659">
    <property type="entry name" value="UPF0250"/>
    <property type="match status" value="1"/>
</dbReference>
<dbReference type="InterPro" id="IPR007454">
    <property type="entry name" value="UPF0250_YbeD-like"/>
</dbReference>
<dbReference type="InterPro" id="IPR027471">
    <property type="entry name" value="YbeD-like_sf"/>
</dbReference>
<dbReference type="PANTHER" id="PTHR38036">
    <property type="entry name" value="UPF0250 PROTEIN YBED"/>
    <property type="match status" value="1"/>
</dbReference>
<dbReference type="PANTHER" id="PTHR38036:SF1">
    <property type="entry name" value="UPF0250 PROTEIN YBED"/>
    <property type="match status" value="1"/>
</dbReference>
<dbReference type="Pfam" id="PF04359">
    <property type="entry name" value="DUF493"/>
    <property type="match status" value="1"/>
</dbReference>
<dbReference type="SUPFAM" id="SSF117991">
    <property type="entry name" value="YbeD/HP0495-like"/>
    <property type="match status" value="1"/>
</dbReference>
<proteinExistence type="inferred from homology"/>
<evidence type="ECO:0000255" key="1">
    <source>
        <dbReference type="HAMAP-Rule" id="MF_00659"/>
    </source>
</evidence>
<sequence length="91" mass="10159">MTDSQKEAPKIEFPCDYPLKVIGVAGPDFQEVVATIVRAHAPEFDASSIDALDSRNGKYLSLRFSIQAQSEEHIRRLFLDLKAHSAVQMVL</sequence>
<keyword id="KW-1185">Reference proteome</keyword>
<protein>
    <recommendedName>
        <fullName evidence="1">UPF0250 protein HCH_05838</fullName>
    </recommendedName>
</protein>